<comment type="catalytic activity">
    <reaction evidence="1">
        <text>tRNA(Lys) + L-lysine + ATP = L-lysyl-tRNA(Lys) + AMP + diphosphate</text>
        <dbReference type="Rhea" id="RHEA:20792"/>
        <dbReference type="Rhea" id="RHEA-COMP:9696"/>
        <dbReference type="Rhea" id="RHEA-COMP:9697"/>
        <dbReference type="ChEBI" id="CHEBI:30616"/>
        <dbReference type="ChEBI" id="CHEBI:32551"/>
        <dbReference type="ChEBI" id="CHEBI:33019"/>
        <dbReference type="ChEBI" id="CHEBI:78442"/>
        <dbReference type="ChEBI" id="CHEBI:78529"/>
        <dbReference type="ChEBI" id="CHEBI:456215"/>
        <dbReference type="EC" id="6.1.1.6"/>
    </reaction>
</comment>
<comment type="cofactor">
    <cofactor evidence="1">
        <name>Mg(2+)</name>
        <dbReference type="ChEBI" id="CHEBI:18420"/>
    </cofactor>
    <text evidence="1">Binds 3 Mg(2+) ions per subunit.</text>
</comment>
<comment type="subunit">
    <text evidence="1">Homodimer.</text>
</comment>
<comment type="subcellular location">
    <subcellularLocation>
        <location evidence="1">Cytoplasm</location>
    </subcellularLocation>
</comment>
<comment type="similarity">
    <text evidence="1">Belongs to the class-II aminoacyl-tRNA synthetase family.</text>
</comment>
<keyword id="KW-0030">Aminoacyl-tRNA synthetase</keyword>
<keyword id="KW-0067">ATP-binding</keyword>
<keyword id="KW-0963">Cytoplasm</keyword>
<keyword id="KW-0436">Ligase</keyword>
<keyword id="KW-0460">Magnesium</keyword>
<keyword id="KW-0479">Metal-binding</keyword>
<keyword id="KW-0547">Nucleotide-binding</keyword>
<keyword id="KW-0648">Protein biosynthesis</keyword>
<keyword id="KW-1185">Reference proteome</keyword>
<dbReference type="EC" id="6.1.1.6" evidence="1"/>
<dbReference type="EMBL" id="BX571965">
    <property type="protein sequence ID" value="CAH36284.1"/>
    <property type="molecule type" value="Genomic_DNA"/>
</dbReference>
<dbReference type="RefSeq" id="WP_011205152.1">
    <property type="nucleotide sequence ID" value="NC_006350.1"/>
</dbReference>
<dbReference type="RefSeq" id="YP_108877.1">
    <property type="nucleotide sequence ID" value="NC_006350.1"/>
</dbReference>
<dbReference type="SMR" id="Q63SN9"/>
<dbReference type="STRING" id="272560.BPSL2281"/>
<dbReference type="KEGG" id="bps:BPSL2281"/>
<dbReference type="PATRIC" id="fig|272560.51.peg.3148"/>
<dbReference type="eggNOG" id="COG1190">
    <property type="taxonomic scope" value="Bacteria"/>
</dbReference>
<dbReference type="Proteomes" id="UP000000605">
    <property type="component" value="Chromosome 1"/>
</dbReference>
<dbReference type="GO" id="GO:0005829">
    <property type="term" value="C:cytosol"/>
    <property type="evidence" value="ECO:0007669"/>
    <property type="project" value="TreeGrafter"/>
</dbReference>
<dbReference type="GO" id="GO:0005524">
    <property type="term" value="F:ATP binding"/>
    <property type="evidence" value="ECO:0007669"/>
    <property type="project" value="UniProtKB-UniRule"/>
</dbReference>
<dbReference type="GO" id="GO:0004824">
    <property type="term" value="F:lysine-tRNA ligase activity"/>
    <property type="evidence" value="ECO:0007669"/>
    <property type="project" value="UniProtKB-UniRule"/>
</dbReference>
<dbReference type="GO" id="GO:0000287">
    <property type="term" value="F:magnesium ion binding"/>
    <property type="evidence" value="ECO:0007669"/>
    <property type="project" value="UniProtKB-UniRule"/>
</dbReference>
<dbReference type="GO" id="GO:0000049">
    <property type="term" value="F:tRNA binding"/>
    <property type="evidence" value="ECO:0007669"/>
    <property type="project" value="TreeGrafter"/>
</dbReference>
<dbReference type="GO" id="GO:0006430">
    <property type="term" value="P:lysyl-tRNA aminoacylation"/>
    <property type="evidence" value="ECO:0007669"/>
    <property type="project" value="UniProtKB-UniRule"/>
</dbReference>
<dbReference type="CDD" id="cd00775">
    <property type="entry name" value="LysRS_core"/>
    <property type="match status" value="1"/>
</dbReference>
<dbReference type="CDD" id="cd04322">
    <property type="entry name" value="LysRS_N"/>
    <property type="match status" value="1"/>
</dbReference>
<dbReference type="FunFam" id="2.40.50.140:FF:000024">
    <property type="entry name" value="Lysine--tRNA ligase"/>
    <property type="match status" value="1"/>
</dbReference>
<dbReference type="FunFam" id="3.30.930.10:FF:000001">
    <property type="entry name" value="Lysine--tRNA ligase"/>
    <property type="match status" value="1"/>
</dbReference>
<dbReference type="Gene3D" id="3.30.930.10">
    <property type="entry name" value="Bira Bifunctional Protein, Domain 2"/>
    <property type="match status" value="1"/>
</dbReference>
<dbReference type="Gene3D" id="2.40.50.140">
    <property type="entry name" value="Nucleic acid-binding proteins"/>
    <property type="match status" value="1"/>
</dbReference>
<dbReference type="HAMAP" id="MF_00252">
    <property type="entry name" value="Lys_tRNA_synth_class2"/>
    <property type="match status" value="1"/>
</dbReference>
<dbReference type="InterPro" id="IPR004364">
    <property type="entry name" value="Aa-tRNA-synt_II"/>
</dbReference>
<dbReference type="InterPro" id="IPR006195">
    <property type="entry name" value="aa-tRNA-synth_II"/>
</dbReference>
<dbReference type="InterPro" id="IPR045864">
    <property type="entry name" value="aa-tRNA-synth_II/BPL/LPL"/>
</dbReference>
<dbReference type="InterPro" id="IPR002313">
    <property type="entry name" value="Lys-tRNA-ligase_II"/>
</dbReference>
<dbReference type="InterPro" id="IPR044136">
    <property type="entry name" value="Lys-tRNA-ligase_II_N"/>
</dbReference>
<dbReference type="InterPro" id="IPR018149">
    <property type="entry name" value="Lys-tRNA-synth_II_C"/>
</dbReference>
<dbReference type="InterPro" id="IPR012340">
    <property type="entry name" value="NA-bd_OB-fold"/>
</dbReference>
<dbReference type="InterPro" id="IPR004365">
    <property type="entry name" value="NA-bd_OB_tRNA"/>
</dbReference>
<dbReference type="NCBIfam" id="TIGR00499">
    <property type="entry name" value="lysS_bact"/>
    <property type="match status" value="1"/>
</dbReference>
<dbReference type="NCBIfam" id="NF001756">
    <property type="entry name" value="PRK00484.1"/>
    <property type="match status" value="1"/>
</dbReference>
<dbReference type="PANTHER" id="PTHR42918:SF15">
    <property type="entry name" value="LYSINE--TRNA LIGASE, CHLOROPLASTIC_MITOCHONDRIAL"/>
    <property type="match status" value="1"/>
</dbReference>
<dbReference type="PANTHER" id="PTHR42918">
    <property type="entry name" value="LYSYL-TRNA SYNTHETASE"/>
    <property type="match status" value="1"/>
</dbReference>
<dbReference type="Pfam" id="PF00152">
    <property type="entry name" value="tRNA-synt_2"/>
    <property type="match status" value="1"/>
</dbReference>
<dbReference type="Pfam" id="PF01336">
    <property type="entry name" value="tRNA_anti-codon"/>
    <property type="match status" value="1"/>
</dbReference>
<dbReference type="PRINTS" id="PR00982">
    <property type="entry name" value="TRNASYNTHLYS"/>
</dbReference>
<dbReference type="SUPFAM" id="SSF55681">
    <property type="entry name" value="Class II aaRS and biotin synthetases"/>
    <property type="match status" value="1"/>
</dbReference>
<dbReference type="SUPFAM" id="SSF50249">
    <property type="entry name" value="Nucleic acid-binding proteins"/>
    <property type="match status" value="1"/>
</dbReference>
<dbReference type="PROSITE" id="PS50862">
    <property type="entry name" value="AA_TRNA_LIGASE_II"/>
    <property type="match status" value="1"/>
</dbReference>
<sequence>MTEPTQPQAAVAADENQIVAERRGKLRALRDQGIAYPNDFQPTHHAAGLQTEYADADKEALDAKALDVAVAGRMMLKRVMGKASFATVQDGSGQIQFFVTPADVGAETYDAFKKWDLGDIVAARGVLFRTNKGELSVKCTELRLLAKALRPLPDKFHGLADQETRYRQRYVDLIVTPETRATFRARTKAIASIRKFMSDADFMEVETPMLHPIPGGAAAKPFVTHHNALDMQMFLRIAPELYLKRLIVGGFERVFEINRNFRNEGVSPRHNPEFTMMEFYAAYTDYRWLMDFTERLIRQAAVDALGTATIRYQGRELDLAKPFHRLTITQAIQKYAPNYTDGQLSDDAFLRGELKRLGVDVTQPAFLNAGIGALQLALFEETAEAQLWEPTFIIDYPIEVSPLARESDTVAGITERFELFVTGREIANGFSELNDPEDQAARFRKQVEQKDAGDEEAMFFDADYIRALEYGMPPTGGCGIGIDRLVMLLTDSPTIRDVLLFPHLRRED</sequence>
<protein>
    <recommendedName>
        <fullName evidence="1">Lysine--tRNA ligase</fullName>
        <ecNumber evidence="1">6.1.1.6</ecNumber>
    </recommendedName>
    <alternativeName>
        <fullName evidence="1">Lysyl-tRNA synthetase</fullName>
        <shortName evidence="1">LysRS</shortName>
    </alternativeName>
</protein>
<reference key="1">
    <citation type="journal article" date="2004" name="Proc. Natl. Acad. Sci. U.S.A.">
        <title>Genomic plasticity of the causative agent of melioidosis, Burkholderia pseudomallei.</title>
        <authorList>
            <person name="Holden M.T.G."/>
            <person name="Titball R.W."/>
            <person name="Peacock S.J."/>
            <person name="Cerdeno-Tarraga A.-M."/>
            <person name="Atkins T."/>
            <person name="Crossman L.C."/>
            <person name="Pitt T."/>
            <person name="Churcher C."/>
            <person name="Mungall K.L."/>
            <person name="Bentley S.D."/>
            <person name="Sebaihia M."/>
            <person name="Thomson N.R."/>
            <person name="Bason N."/>
            <person name="Beacham I.R."/>
            <person name="Brooks K."/>
            <person name="Brown K.A."/>
            <person name="Brown N.F."/>
            <person name="Challis G.L."/>
            <person name="Cherevach I."/>
            <person name="Chillingworth T."/>
            <person name="Cronin A."/>
            <person name="Crossett B."/>
            <person name="Davis P."/>
            <person name="DeShazer D."/>
            <person name="Feltwell T."/>
            <person name="Fraser A."/>
            <person name="Hance Z."/>
            <person name="Hauser H."/>
            <person name="Holroyd S."/>
            <person name="Jagels K."/>
            <person name="Keith K.E."/>
            <person name="Maddison M."/>
            <person name="Moule S."/>
            <person name="Price C."/>
            <person name="Quail M.A."/>
            <person name="Rabbinowitsch E."/>
            <person name="Rutherford K."/>
            <person name="Sanders M."/>
            <person name="Simmonds M."/>
            <person name="Songsivilai S."/>
            <person name="Stevens K."/>
            <person name="Tumapa S."/>
            <person name="Vesaratchavest M."/>
            <person name="Whitehead S."/>
            <person name="Yeats C."/>
            <person name="Barrell B.G."/>
            <person name="Oyston P.C.F."/>
            <person name="Parkhill J."/>
        </authorList>
    </citation>
    <scope>NUCLEOTIDE SEQUENCE [LARGE SCALE GENOMIC DNA]</scope>
    <source>
        <strain>K96243</strain>
    </source>
</reference>
<feature type="chain" id="PRO_1000012858" description="Lysine--tRNA ligase">
    <location>
        <begin position="1"/>
        <end position="508"/>
    </location>
</feature>
<feature type="binding site" evidence="1">
    <location>
        <position position="418"/>
    </location>
    <ligand>
        <name>Mg(2+)</name>
        <dbReference type="ChEBI" id="CHEBI:18420"/>
        <label>1</label>
    </ligand>
</feature>
<feature type="binding site" evidence="1">
    <location>
        <position position="425"/>
    </location>
    <ligand>
        <name>Mg(2+)</name>
        <dbReference type="ChEBI" id="CHEBI:18420"/>
        <label>1</label>
    </ligand>
</feature>
<feature type="binding site" evidence="1">
    <location>
        <position position="425"/>
    </location>
    <ligand>
        <name>Mg(2+)</name>
        <dbReference type="ChEBI" id="CHEBI:18420"/>
        <label>2</label>
    </ligand>
</feature>
<accession>Q63SN9</accession>
<evidence type="ECO:0000255" key="1">
    <source>
        <dbReference type="HAMAP-Rule" id="MF_00252"/>
    </source>
</evidence>
<proteinExistence type="inferred from homology"/>
<organism>
    <name type="scientific">Burkholderia pseudomallei (strain K96243)</name>
    <dbReference type="NCBI Taxonomy" id="272560"/>
    <lineage>
        <taxon>Bacteria</taxon>
        <taxon>Pseudomonadati</taxon>
        <taxon>Pseudomonadota</taxon>
        <taxon>Betaproteobacteria</taxon>
        <taxon>Burkholderiales</taxon>
        <taxon>Burkholderiaceae</taxon>
        <taxon>Burkholderia</taxon>
        <taxon>pseudomallei group</taxon>
    </lineage>
</organism>
<name>SYK_BURPS</name>
<gene>
    <name evidence="1" type="primary">lysS</name>
    <name type="ordered locus">BPSL2281</name>
</gene>